<organism>
    <name type="scientific">Escherichia coli O139:H28 (strain E24377A / ETEC)</name>
    <dbReference type="NCBI Taxonomy" id="331111"/>
    <lineage>
        <taxon>Bacteria</taxon>
        <taxon>Pseudomonadati</taxon>
        <taxon>Pseudomonadota</taxon>
        <taxon>Gammaproteobacteria</taxon>
        <taxon>Enterobacterales</taxon>
        <taxon>Enterobacteriaceae</taxon>
        <taxon>Escherichia</taxon>
    </lineage>
</organism>
<protein>
    <recommendedName>
        <fullName evidence="1">Holliday junction branch migration complex subunit RuvA</fullName>
    </recommendedName>
</protein>
<gene>
    <name evidence="1" type="primary">ruvA</name>
    <name type="ordered locus">EcE24377A_2091</name>
</gene>
<feature type="chain" id="PRO_1000057236" description="Holliday junction branch migration complex subunit RuvA">
    <location>
        <begin position="1"/>
        <end position="203"/>
    </location>
</feature>
<feature type="region of interest" description="Domain I" evidence="1">
    <location>
        <begin position="1"/>
        <end position="64"/>
    </location>
</feature>
<feature type="region of interest" description="Domain II" evidence="1">
    <location>
        <begin position="65"/>
        <end position="142"/>
    </location>
</feature>
<feature type="region of interest" description="Flexible linker" evidence="1">
    <location>
        <begin position="143"/>
        <end position="154"/>
    </location>
</feature>
<feature type="region of interest" description="Domain III" evidence="1">
    <location>
        <begin position="155"/>
        <end position="203"/>
    </location>
</feature>
<keyword id="KW-0963">Cytoplasm</keyword>
<keyword id="KW-0227">DNA damage</keyword>
<keyword id="KW-0233">DNA recombination</keyword>
<keyword id="KW-0234">DNA repair</keyword>
<keyword id="KW-0238">DNA-binding</keyword>
<keyword id="KW-1185">Reference proteome</keyword>
<keyword id="KW-0742">SOS response</keyword>
<reference key="1">
    <citation type="journal article" date="2008" name="J. Bacteriol.">
        <title>The pangenome structure of Escherichia coli: comparative genomic analysis of E. coli commensal and pathogenic isolates.</title>
        <authorList>
            <person name="Rasko D.A."/>
            <person name="Rosovitz M.J."/>
            <person name="Myers G.S.A."/>
            <person name="Mongodin E.F."/>
            <person name="Fricke W.F."/>
            <person name="Gajer P."/>
            <person name="Crabtree J."/>
            <person name="Sebaihia M."/>
            <person name="Thomson N.R."/>
            <person name="Chaudhuri R."/>
            <person name="Henderson I.R."/>
            <person name="Sperandio V."/>
            <person name="Ravel J."/>
        </authorList>
    </citation>
    <scope>NUCLEOTIDE SEQUENCE [LARGE SCALE GENOMIC DNA]</scope>
    <source>
        <strain>E24377A / ETEC</strain>
    </source>
</reference>
<accession>A7ZMY5</accession>
<proteinExistence type="inferred from homology"/>
<evidence type="ECO:0000255" key="1">
    <source>
        <dbReference type="HAMAP-Rule" id="MF_00031"/>
    </source>
</evidence>
<dbReference type="EMBL" id="CP000800">
    <property type="protein sequence ID" value="ABV21140.1"/>
    <property type="molecule type" value="Genomic_DNA"/>
</dbReference>
<dbReference type="RefSeq" id="WP_000580323.1">
    <property type="nucleotide sequence ID" value="NC_009801.1"/>
</dbReference>
<dbReference type="SMR" id="A7ZMY5"/>
<dbReference type="GeneID" id="75057740"/>
<dbReference type="KEGG" id="ecw:EcE24377A_2091"/>
<dbReference type="HOGENOM" id="CLU_087936_0_0_6"/>
<dbReference type="Proteomes" id="UP000001122">
    <property type="component" value="Chromosome"/>
</dbReference>
<dbReference type="GO" id="GO:0005737">
    <property type="term" value="C:cytoplasm"/>
    <property type="evidence" value="ECO:0007669"/>
    <property type="project" value="UniProtKB-SubCell"/>
</dbReference>
<dbReference type="GO" id="GO:0009379">
    <property type="term" value="C:Holliday junction helicase complex"/>
    <property type="evidence" value="ECO:0007669"/>
    <property type="project" value="InterPro"/>
</dbReference>
<dbReference type="GO" id="GO:0048476">
    <property type="term" value="C:Holliday junction resolvase complex"/>
    <property type="evidence" value="ECO:0007669"/>
    <property type="project" value="UniProtKB-UniRule"/>
</dbReference>
<dbReference type="GO" id="GO:0005524">
    <property type="term" value="F:ATP binding"/>
    <property type="evidence" value="ECO:0007669"/>
    <property type="project" value="InterPro"/>
</dbReference>
<dbReference type="GO" id="GO:0000400">
    <property type="term" value="F:four-way junction DNA binding"/>
    <property type="evidence" value="ECO:0007669"/>
    <property type="project" value="UniProtKB-UniRule"/>
</dbReference>
<dbReference type="GO" id="GO:0009378">
    <property type="term" value="F:four-way junction helicase activity"/>
    <property type="evidence" value="ECO:0007669"/>
    <property type="project" value="InterPro"/>
</dbReference>
<dbReference type="GO" id="GO:0006310">
    <property type="term" value="P:DNA recombination"/>
    <property type="evidence" value="ECO:0007669"/>
    <property type="project" value="UniProtKB-UniRule"/>
</dbReference>
<dbReference type="GO" id="GO:0006281">
    <property type="term" value="P:DNA repair"/>
    <property type="evidence" value="ECO:0007669"/>
    <property type="project" value="UniProtKB-UniRule"/>
</dbReference>
<dbReference type="GO" id="GO:0009432">
    <property type="term" value="P:SOS response"/>
    <property type="evidence" value="ECO:0007669"/>
    <property type="project" value="UniProtKB-UniRule"/>
</dbReference>
<dbReference type="CDD" id="cd14332">
    <property type="entry name" value="UBA_RuvA_C"/>
    <property type="match status" value="1"/>
</dbReference>
<dbReference type="FunFam" id="1.10.150.20:FF:000012">
    <property type="entry name" value="Holliday junction ATP-dependent DNA helicase RuvA"/>
    <property type="match status" value="1"/>
</dbReference>
<dbReference type="FunFam" id="1.10.8.10:FF:000008">
    <property type="entry name" value="Holliday junction ATP-dependent DNA helicase RuvA"/>
    <property type="match status" value="1"/>
</dbReference>
<dbReference type="FunFam" id="2.40.50.140:FF:000083">
    <property type="entry name" value="Holliday junction ATP-dependent DNA helicase RuvA"/>
    <property type="match status" value="1"/>
</dbReference>
<dbReference type="Gene3D" id="1.10.150.20">
    <property type="entry name" value="5' to 3' exonuclease, C-terminal subdomain"/>
    <property type="match status" value="1"/>
</dbReference>
<dbReference type="Gene3D" id="1.10.8.10">
    <property type="entry name" value="DNA helicase RuvA subunit, C-terminal domain"/>
    <property type="match status" value="1"/>
</dbReference>
<dbReference type="Gene3D" id="2.40.50.140">
    <property type="entry name" value="Nucleic acid-binding proteins"/>
    <property type="match status" value="1"/>
</dbReference>
<dbReference type="HAMAP" id="MF_00031">
    <property type="entry name" value="DNA_HJ_migration_RuvA"/>
    <property type="match status" value="1"/>
</dbReference>
<dbReference type="InterPro" id="IPR013849">
    <property type="entry name" value="DNA_helicase_Holl-junc_RuvA_I"/>
</dbReference>
<dbReference type="InterPro" id="IPR003583">
    <property type="entry name" value="Hlx-hairpin-Hlx_DNA-bd_motif"/>
</dbReference>
<dbReference type="InterPro" id="IPR012340">
    <property type="entry name" value="NA-bd_OB-fold"/>
</dbReference>
<dbReference type="InterPro" id="IPR000085">
    <property type="entry name" value="RuvA"/>
</dbReference>
<dbReference type="InterPro" id="IPR010994">
    <property type="entry name" value="RuvA_2-like"/>
</dbReference>
<dbReference type="InterPro" id="IPR011114">
    <property type="entry name" value="RuvA_C"/>
</dbReference>
<dbReference type="InterPro" id="IPR036267">
    <property type="entry name" value="RuvA_C_sf"/>
</dbReference>
<dbReference type="NCBIfam" id="TIGR00084">
    <property type="entry name" value="ruvA"/>
    <property type="match status" value="1"/>
</dbReference>
<dbReference type="Pfam" id="PF14520">
    <property type="entry name" value="HHH_5"/>
    <property type="match status" value="1"/>
</dbReference>
<dbReference type="Pfam" id="PF07499">
    <property type="entry name" value="RuvA_C"/>
    <property type="match status" value="1"/>
</dbReference>
<dbReference type="Pfam" id="PF01330">
    <property type="entry name" value="RuvA_N"/>
    <property type="match status" value="1"/>
</dbReference>
<dbReference type="SMART" id="SM00278">
    <property type="entry name" value="HhH1"/>
    <property type="match status" value="2"/>
</dbReference>
<dbReference type="SUPFAM" id="SSF46929">
    <property type="entry name" value="DNA helicase RuvA subunit, C-terminal domain"/>
    <property type="match status" value="1"/>
</dbReference>
<dbReference type="SUPFAM" id="SSF50249">
    <property type="entry name" value="Nucleic acid-binding proteins"/>
    <property type="match status" value="1"/>
</dbReference>
<dbReference type="SUPFAM" id="SSF47781">
    <property type="entry name" value="RuvA domain 2-like"/>
    <property type="match status" value="1"/>
</dbReference>
<comment type="function">
    <text evidence="1">The RuvA-RuvB-RuvC complex processes Holliday junction (HJ) DNA during genetic recombination and DNA repair, while the RuvA-RuvB complex plays an important role in the rescue of blocked DNA replication forks via replication fork reversal (RFR). RuvA specifically binds to HJ cruciform DNA, conferring on it an open structure. The RuvB hexamer acts as an ATP-dependent pump, pulling dsDNA into and through the RuvAB complex. HJ branch migration allows RuvC to scan DNA until it finds its consensus sequence, where it cleaves and resolves the cruciform DNA.</text>
</comment>
<comment type="subunit">
    <text evidence="1">Homotetramer. Forms an RuvA(8)-RuvB(12)-Holliday junction (HJ) complex. HJ DNA is sandwiched between 2 RuvA tetramers; dsDNA enters through RuvA and exits via RuvB. An RuvB hexamer assembles on each DNA strand where it exits the tetramer. Each RuvB hexamer is contacted by two RuvA subunits (via domain III) on 2 adjacent RuvB subunits; this complex drives branch migration. In the full resolvosome a probable DNA-RuvA(4)-RuvB(12)-RuvC(2) complex forms which resolves the HJ.</text>
</comment>
<comment type="subcellular location">
    <subcellularLocation>
        <location evidence="1">Cytoplasm</location>
    </subcellularLocation>
</comment>
<comment type="domain">
    <text evidence="1">Has three domains with a flexible linker between the domains II and III and assumes an 'L' shape. Domain III is highly mobile and contacts RuvB.</text>
</comment>
<comment type="similarity">
    <text evidence="1">Belongs to the RuvA family.</text>
</comment>
<name>RUVA_ECO24</name>
<sequence>MIGRLRGIIIEKQPPLVLIEVGGVGYEVHMPMTCFYELPEAGQEAIVFTHFVVREDAQLLYGFNNKQERTLFKELIKTNGVGPKLALAILSGMSAQQFVNAVEREEVGALVKLPGIGKKTAERLIVEMKDRFKGLHGDLFTPAADLVLTSPASPATDDAEQEAVAALVALGYKPQEASRMVSKIARPDASSETLIREALRAAL</sequence>